<name>INSZ_ECOLI</name>
<keyword id="KW-1185">Reference proteome</keyword>
<feature type="chain" id="PRO_0000168866" description="Putative transposase InsZ">
    <location>
        <begin position="1"/>
        <end position="299"/>
    </location>
</feature>
<feature type="region of interest" description="Disordered" evidence="1">
    <location>
        <begin position="276"/>
        <end position="299"/>
    </location>
</feature>
<feature type="compositionally biased region" description="Basic residues" evidence="1">
    <location>
        <begin position="276"/>
        <end position="291"/>
    </location>
</feature>
<accession>P30192</accession>
<accession>P76024</accession>
<dbReference type="EMBL" id="X67326">
    <property type="protein sequence ID" value="CAA47742.1"/>
    <property type="status" value="ALT_FRAME"/>
    <property type="molecule type" value="Genomic_DNA"/>
</dbReference>
<dbReference type="EMBL" id="U00096">
    <property type="status" value="NOT_ANNOTATED_CDS"/>
    <property type="molecule type" value="Genomic_DNA"/>
</dbReference>
<dbReference type="EMBL" id="AP009048">
    <property type="status" value="NOT_ANNOTATED_CDS"/>
    <property type="molecule type" value="Genomic_DNA"/>
</dbReference>
<dbReference type="PIR" id="C64871">
    <property type="entry name" value="C64871"/>
</dbReference>
<dbReference type="PIR" id="I76912">
    <property type="entry name" value="I76912"/>
</dbReference>
<dbReference type="FunCoup" id="P30192">
    <property type="interactions" value="5"/>
</dbReference>
<dbReference type="IntAct" id="P30192">
    <property type="interactions" value="5"/>
</dbReference>
<dbReference type="EchoBASE" id="EB1568"/>
<dbReference type="InParanoid" id="P30192"/>
<dbReference type="PhylomeDB" id="P30192"/>
<dbReference type="Proteomes" id="UP000000625">
    <property type="component" value="Chromosome"/>
</dbReference>
<dbReference type="GO" id="GO:0003677">
    <property type="term" value="F:DNA binding"/>
    <property type="evidence" value="ECO:0007669"/>
    <property type="project" value="InterPro"/>
</dbReference>
<dbReference type="GO" id="GO:0004803">
    <property type="term" value="F:transposase activity"/>
    <property type="evidence" value="ECO:0007669"/>
    <property type="project" value="InterPro"/>
</dbReference>
<dbReference type="GO" id="GO:0006313">
    <property type="term" value="P:DNA transposition"/>
    <property type="evidence" value="ECO:0007669"/>
    <property type="project" value="InterPro"/>
</dbReference>
<dbReference type="InterPro" id="IPR012337">
    <property type="entry name" value="RNaseH-like_sf"/>
</dbReference>
<dbReference type="InterPro" id="IPR047952">
    <property type="entry name" value="Transpos_IS4"/>
</dbReference>
<dbReference type="InterPro" id="IPR002559">
    <property type="entry name" value="Transposase_11"/>
</dbReference>
<dbReference type="InterPro" id="IPR024473">
    <property type="entry name" value="Transposases_IS4_N"/>
</dbReference>
<dbReference type="NCBIfam" id="NF033592">
    <property type="entry name" value="transpos_IS4_1"/>
    <property type="match status" value="1"/>
</dbReference>
<dbReference type="PANTHER" id="PTHR37529">
    <property type="entry name" value="TRANSPOSASE INSG FOR INSERTION SEQUENCE ELEMENT IS4-RELATED"/>
    <property type="match status" value="1"/>
</dbReference>
<dbReference type="PANTHER" id="PTHR37529:SF1">
    <property type="entry name" value="TRANSPOSASE INSG FOR INSERTION SEQUENCE ELEMENT IS4-RELATED"/>
    <property type="match status" value="1"/>
</dbReference>
<dbReference type="Pfam" id="PF01609">
    <property type="entry name" value="DDE_Tnp_1"/>
    <property type="match status" value="1"/>
</dbReference>
<dbReference type="Pfam" id="PF13006">
    <property type="entry name" value="Nterm_IS4"/>
    <property type="match status" value="1"/>
</dbReference>
<dbReference type="SUPFAM" id="SSF53098">
    <property type="entry name" value="Ribonuclease H-like"/>
    <property type="match status" value="1"/>
</dbReference>
<gene>
    <name type="primary">insZ</name>
    <name type="synonym">ychG</name>
    <name type="ordered locus">b4573</name>
    <name type="ordered locus">JW1227/JW5883</name>
    <name type="ORF">b1239/b1240</name>
</gene>
<organism>
    <name type="scientific">Escherichia coli (strain K12)</name>
    <dbReference type="NCBI Taxonomy" id="83333"/>
    <lineage>
        <taxon>Bacteria</taxon>
        <taxon>Pseudomonadati</taxon>
        <taxon>Pseudomonadota</taxon>
        <taxon>Gammaproteobacteria</taxon>
        <taxon>Enterobacterales</taxon>
        <taxon>Enterobacteriaceae</taxon>
        <taxon>Escherichia</taxon>
    </lineage>
</organism>
<evidence type="ECO:0000256" key="1">
    <source>
        <dbReference type="SAM" id="MobiDB-lite"/>
    </source>
</evidence>
<evidence type="ECO:0000305" key="2"/>
<proteinExistence type="predicted"/>
<reference key="1">
    <citation type="journal article" date="1995" name="Microbiology">
        <title>Filling the gap between hns and adhE in Escherichia coli K12.</title>
        <authorList>
            <person name="Danchin A."/>
            <person name="Krin E."/>
        </authorList>
    </citation>
    <scope>NUCLEOTIDE SEQUENCE [GENOMIC DNA]</scope>
    <source>
        <strain>K12</strain>
    </source>
</reference>
<reference key="2">
    <citation type="journal article" date="1996" name="DNA Res.">
        <title>A 718-kb DNA sequence of the Escherichia coli K-12 genome corresponding to the 12.7-28.0 min region on the linkage map.</title>
        <authorList>
            <person name="Oshima T."/>
            <person name="Aiba H."/>
            <person name="Baba T."/>
            <person name="Fujita K."/>
            <person name="Hayashi K."/>
            <person name="Honjo A."/>
            <person name="Ikemoto K."/>
            <person name="Inada T."/>
            <person name="Itoh T."/>
            <person name="Kajihara M."/>
            <person name="Kanai K."/>
            <person name="Kashimoto K."/>
            <person name="Kimura S."/>
            <person name="Kitagawa M."/>
            <person name="Makino K."/>
            <person name="Masuda S."/>
            <person name="Miki T."/>
            <person name="Mizobuchi K."/>
            <person name="Mori H."/>
            <person name="Motomura K."/>
            <person name="Nakamura Y."/>
            <person name="Nashimoto H."/>
            <person name="Nishio Y."/>
            <person name="Saito N."/>
            <person name="Sampei G."/>
            <person name="Seki Y."/>
            <person name="Tagami H."/>
            <person name="Takemoto K."/>
            <person name="Wada C."/>
            <person name="Yamamoto Y."/>
            <person name="Yano M."/>
            <person name="Horiuchi T."/>
        </authorList>
    </citation>
    <scope>NUCLEOTIDE SEQUENCE [LARGE SCALE GENOMIC DNA]</scope>
    <source>
        <strain>K12 / W3110 / ATCC 27325 / DSM 5911</strain>
    </source>
</reference>
<reference key="3">
    <citation type="journal article" date="1996" name="DNA Res.">
        <title>A 570-kb DNA sequence of the Escherichia coli K-12 genome corresponding to the 28.0-40.1 min region on the linkage map.</title>
        <authorList>
            <person name="Aiba H."/>
            <person name="Baba T."/>
            <person name="Fujita K."/>
            <person name="Hayashi K."/>
            <person name="Inada T."/>
            <person name="Isono K."/>
            <person name="Itoh T."/>
            <person name="Kasai H."/>
            <person name="Kashimoto K."/>
            <person name="Kimura S."/>
            <person name="Kitakawa M."/>
            <person name="Kitagawa M."/>
            <person name="Makino K."/>
            <person name="Miki T."/>
            <person name="Mizobuchi K."/>
            <person name="Mori H."/>
            <person name="Mori T."/>
            <person name="Motomura K."/>
            <person name="Nakade S."/>
            <person name="Nakamura Y."/>
            <person name="Nashimoto H."/>
            <person name="Nishio Y."/>
            <person name="Oshima T."/>
            <person name="Saito N."/>
            <person name="Sampei G."/>
            <person name="Seki Y."/>
            <person name="Sivasundaram S."/>
            <person name="Tagami H."/>
            <person name="Takeda J."/>
            <person name="Takemoto K."/>
            <person name="Takeuchi Y."/>
            <person name="Wada C."/>
            <person name="Yamamoto Y."/>
            <person name="Horiuchi T."/>
        </authorList>
    </citation>
    <scope>NUCLEOTIDE SEQUENCE [LARGE SCALE GENOMIC DNA]</scope>
    <source>
        <strain>K12 / W3110 / ATCC 27325 / DSM 5911</strain>
    </source>
</reference>
<reference key="4">
    <citation type="journal article" date="1997" name="Science">
        <title>The complete genome sequence of Escherichia coli K-12.</title>
        <authorList>
            <person name="Blattner F.R."/>
            <person name="Plunkett G. III"/>
            <person name="Bloch C.A."/>
            <person name="Perna N.T."/>
            <person name="Burland V."/>
            <person name="Riley M."/>
            <person name="Collado-Vides J."/>
            <person name="Glasner J.D."/>
            <person name="Rode C.K."/>
            <person name="Mayhew G.F."/>
            <person name="Gregor J."/>
            <person name="Davis N.W."/>
            <person name="Kirkpatrick H.A."/>
            <person name="Goeden M.A."/>
            <person name="Rose D.J."/>
            <person name="Mau B."/>
            <person name="Shao Y."/>
        </authorList>
    </citation>
    <scope>NUCLEOTIDE SEQUENCE [LARGE SCALE GENOMIC DNA]</scope>
    <source>
        <strain>K12 / MG1655 / ATCC 47076</strain>
    </source>
</reference>
<reference key="5">
    <citation type="journal article" date="2006" name="Mol. Syst. Biol.">
        <title>Highly accurate genome sequences of Escherichia coli K-12 strains MG1655 and W3110.</title>
        <authorList>
            <person name="Hayashi K."/>
            <person name="Morooka N."/>
            <person name="Yamamoto Y."/>
            <person name="Fujita K."/>
            <person name="Isono K."/>
            <person name="Choi S."/>
            <person name="Ohtsubo E."/>
            <person name="Baba T."/>
            <person name="Wanner B.L."/>
            <person name="Mori H."/>
            <person name="Horiuchi T."/>
        </authorList>
    </citation>
    <scope>NUCLEOTIDE SEQUENCE [LARGE SCALE GENOMIC DNA]</scope>
    <source>
        <strain>K12 / W3110 / ATCC 27325 / DSM 5911</strain>
    </source>
</reference>
<sequence length="299" mass="33808">MPLLNDLLDFSDHPLMPPPSAQLFAEHLPTEWIQHCLTLSAHATVRRRRLPGDMVIWMVVQNEPITDVVRRLNLSADGEAGMNLLARSAVTQARQRVGAAPVEWLFRQTAQDRGAERYLKDDWHGLQLFAIDGAQFRTPDKPELREYYGSANTSTKRQNAYPVMRLVALMNLGSHILLNAVTAPYRQSETVLAHSMLATIPDNSITLFDKLFYSEDLLLTLNQKGCNRHWLLPAWKNIASEMIELGNTASPGTIPKRLEHLRGALEVVFITKRPRPSRPRSVKISKTRYPVKHSAAPLK</sequence>
<protein>
    <recommendedName>
        <fullName>Putative transposase InsZ</fullName>
    </recommendedName>
</protein>
<comment type="miscellaneous">
    <text evidence="2">Could be the product of a pseudogene; missing an internal segment of about 130 residues compared to orthologs.</text>
</comment>
<comment type="sequence caution" evidence="2">
    <conflict type="frameshift">
        <sequence resource="EMBL" id="AP009048"/>
    </conflict>
</comment>
<comment type="sequence caution" evidence="2">
    <conflict type="frameshift">
        <sequence resource="EMBL-CDS" id="CAA47742"/>
    </conflict>
</comment>
<comment type="sequence caution" evidence="2">
    <conflict type="frameshift">
        <sequence resource="EMBL" id="U00096"/>
    </conflict>
</comment>